<protein>
    <recommendedName>
        <fullName evidence="8">TAL effector protein Rip19</fullName>
    </recommendedName>
</protein>
<sequence length="720" mass="77065">MRIGKSSGWLNESVSLEYEHVSPPTRPRDTRRRPRAASDGGLAHLHRRLAVGYAEDTPRTGARSPAPRRPLPVAPASAPPAPSLVPEPPMPVSLPVVSSPRFSAGSSAAITDPFSSLPPTPVLYAMARELKALSDATWQPAVPLPAEPPTDARRGNTVFDEASASSPVIASACPQAFASPPRAPRSARARRARTGGDAWPAPTFLSRPSSSRIGRDVFGKLVALGYSREQIRKLKQESLSEIAKYHTTLTGQGFTHADICRISRRRQSLRVVARNYPELAAALPELTRAHIVDIARQRSGDLALQALLPVATALTAAPLRLSASQIATVAQYGERPAIQALYRLRRKLTRAPLHLTPQQVVAIASHDGGKPALEAVWAKLPVLRGVPYALSTAQVVAIACISGQQALEAIEAHMPTLRQAPHSLSPERVAAIACIGGRSAVEAVRQGLPVKAIRRIRREKAPVAGPPPASLGPTPQELVAVLHFFRAHQQPRQAFVDALAAFQTTRPALLRLLSSVGVTEIEALGGTIPDATERWQRLLGRLGFRPATGAAAPSPDSLQGFAQSLERTLGSPGMAGQSACSPHRKRPAETAIAPRSIRRRPNNAGQPSEPWPDQLAWLQRRKRTARSHIRADSAASVPANLHLGTRAQFTPDRLRAEPGPIMQAHTSPASVSFGSHVAFEPGLPDPGTPTSADLASFEAEPFGVGPLDFHLDWLLQILEA</sequence>
<accession>Q68A49</accession>
<organism evidence="9">
    <name type="scientific">Ralstonia solanacearum</name>
    <name type="common">Pseudomonas solanacearum</name>
    <dbReference type="NCBI Taxonomy" id="305"/>
    <lineage>
        <taxon>Bacteria</taxon>
        <taxon>Pseudomonadati</taxon>
        <taxon>Pseudomonadota</taxon>
        <taxon>Betaproteobacteria</taxon>
        <taxon>Burkholderiales</taxon>
        <taxon>Burkholderiaceae</taxon>
        <taxon>Ralstonia</taxon>
        <taxon>Ralstonia solanacearum species complex</taxon>
    </lineage>
</organism>
<reference key="1">
    <citation type="journal article" date="2004" name="Mol. Microbiol.">
        <title>Genetic screening of Hrp type III-related pathogenicity genes controlled by the HrpB transcriptional activator in Ralstonia solanacearum.</title>
        <authorList>
            <person name="Mukaihara T."/>
            <person name="Tamura N."/>
            <person name="Murata Y."/>
            <person name="Iwabuchi M."/>
        </authorList>
    </citation>
    <scope>NUCLEOTIDE SEQUENCE [GENOMIC DNA]</scope>
    <scope>INDUCTION BY HRP</scope>
    <source>
        <strain>RS1000</strain>
    </source>
</reference>
<reference key="2">
    <citation type="journal article" date="2010" name="Mol. Plant Microbe Interact.">
        <title>Genome-wide identification of a large repertoire of Ralstonia solanacearum type III effector proteins by a new functional screen.</title>
        <authorList>
            <person name="Mukaihara T."/>
            <person name="Tamura N."/>
            <person name="Iwabuchi M."/>
        </authorList>
    </citation>
    <scope>SUBCELLULAR LOCATION</scope>
</reference>
<reference key="3">
    <citation type="journal article" date="2013" name="New Phytol.">
        <title>Breaking the DNA-binding code of Ralstonia solanacearum TAL effectors provides new possibilities to generate plant resistance genes against bacterial wilt disease.</title>
        <authorList>
            <person name="de Lange O."/>
            <person name="Schreiber T."/>
            <person name="Schandry N."/>
            <person name="Radeck J."/>
            <person name="Braun K.H."/>
            <person name="Koszinowski J."/>
            <person name="Heuer H."/>
            <person name="Strauss A."/>
            <person name="Lahaye T."/>
        </authorList>
    </citation>
    <scope>FUNCTION</scope>
    <scope>SUBCELLULAR LOCATION</scope>
    <scope>DOMAIN</scope>
    <scope>REPEAT</scope>
</reference>
<feature type="chain" id="PRO_0000430626" description="TAL effector protein Rip19">
    <location>
        <begin position="1"/>
        <end position="720"/>
    </location>
</feature>
<feature type="repeat" description="Cryptic repeat -1" evidence="7">
    <location>
        <begin position="286"/>
        <end position="320"/>
    </location>
</feature>
<feature type="repeat" description="Cryptic repeat 0" evidence="7">
    <location>
        <begin position="321"/>
        <end position="354"/>
    </location>
</feature>
<feature type="repeat" description="Core repeat 1" evidence="7">
    <location>
        <begin position="355"/>
        <end position="389"/>
    </location>
</feature>
<feature type="repeat" description="Cryptic repeat +1" evidence="7">
    <location>
        <begin position="390"/>
        <end position="423"/>
    </location>
</feature>
<feature type="repeat" description="Cryptic repeat +2" evidence="7">
    <location>
        <begin position="424"/>
        <end position="457"/>
    </location>
</feature>
<feature type="region of interest" description="Disordered" evidence="2">
    <location>
        <begin position="13"/>
        <end position="85"/>
    </location>
</feature>
<feature type="region of interest" description="Disordered" evidence="2">
    <location>
        <begin position="175"/>
        <end position="205"/>
    </location>
</feature>
<feature type="region of interest" description="Disordered" evidence="2">
    <location>
        <begin position="571"/>
        <end position="611"/>
    </location>
</feature>
<feature type="short sequence motif" description="Nuclear localization signal 1" evidence="7">
    <location>
        <begin position="185"/>
        <end position="191"/>
    </location>
</feature>
<feature type="short sequence motif" description="Nuclear localization signal 2" evidence="7">
    <location>
        <begin position="455"/>
        <end position="458"/>
    </location>
</feature>
<feature type="short sequence motif" description="Nuclear localization signal 3" evidence="7">
    <location>
        <begin position="583"/>
        <end position="586"/>
    </location>
</feature>
<feature type="short sequence motif" description="Nuclear localization signal 4" evidence="7">
    <location>
        <begin position="620"/>
        <end position="623"/>
    </location>
</feature>
<feature type="compositionally biased region" description="Pro residues" evidence="2">
    <location>
        <begin position="67"/>
        <end position="85"/>
    </location>
</feature>
<comment type="function">
    <text evidence="7">Does not activate plant gene transcription, because it has too few core repeats.</text>
</comment>
<comment type="subcellular location">
    <subcellularLocation>
        <location evidence="1">Secreted</location>
    </subcellularLocation>
    <subcellularLocation>
        <location evidence="4">Host nucleus</location>
    </subcellularLocation>
    <text evidence="3 4">Secreted via type III secretion system (T3SS, PubMed:20121447).</text>
</comment>
<comment type="induction">
    <text>By hrpB.</text>
</comment>
<comment type="domain">
    <text evidence="4">There are at least 4 possible nuclear localization signals, both N- and C-terminal regions contribute to nuclear localization.</text>
</comment>
<comment type="similarity">
    <text evidence="8">Belongs to the transcription activator-like effector (TALE) family. RipTAL/RTL subfamily.</text>
</comment>
<proteinExistence type="evidence at transcript level"/>
<name>RIP19_RALSL</name>
<keyword id="KW-1048">Host nucleus</keyword>
<keyword id="KW-0677">Repeat</keyword>
<keyword id="KW-0964">Secreted</keyword>
<gene>
    <name evidence="6" type="primary">rip19</name>
    <name evidence="5" type="synonym">hpx17</name>
</gene>
<dbReference type="EMBL" id="AB178011">
    <property type="protein sequence ID" value="BAD42396.1"/>
    <property type="molecule type" value="Genomic_DNA"/>
</dbReference>
<dbReference type="SMR" id="Q68A49"/>
<dbReference type="GO" id="GO:0005576">
    <property type="term" value="C:extracellular region"/>
    <property type="evidence" value="ECO:0007669"/>
    <property type="project" value="UniProtKB-SubCell"/>
</dbReference>
<dbReference type="GO" id="GO:0042025">
    <property type="term" value="C:host cell nucleus"/>
    <property type="evidence" value="ECO:0007669"/>
    <property type="project" value="UniProtKB-SubCell"/>
</dbReference>
<dbReference type="Gene3D" id="6.10.140.500">
    <property type="match status" value="2"/>
</dbReference>
<dbReference type="InterPro" id="IPR005042">
    <property type="entry name" value="TAL_effector_rpt"/>
</dbReference>
<dbReference type="Pfam" id="PF03377">
    <property type="entry name" value="TAL_effector"/>
    <property type="match status" value="3"/>
</dbReference>
<evidence type="ECO:0000250" key="1">
    <source>
        <dbReference type="UniProtKB" id="P14727"/>
    </source>
</evidence>
<evidence type="ECO:0000256" key="2">
    <source>
        <dbReference type="SAM" id="MobiDB-lite"/>
    </source>
</evidence>
<evidence type="ECO:0000269" key="3">
    <source>
    </source>
</evidence>
<evidence type="ECO:0000269" key="4">
    <source>
    </source>
</evidence>
<evidence type="ECO:0000303" key="5">
    <source>
    </source>
</evidence>
<evidence type="ECO:0000303" key="6">
    <source>
    </source>
</evidence>
<evidence type="ECO:0000303" key="7">
    <source>
    </source>
</evidence>
<evidence type="ECO:0000305" key="8"/>
<evidence type="ECO:0000312" key="9">
    <source>
        <dbReference type="EMBL" id="BAD42396.1"/>
    </source>
</evidence>